<name>RL23_CERS4</name>
<comment type="function">
    <text evidence="1">One of the early assembly proteins it binds 23S rRNA. One of the proteins that surrounds the polypeptide exit tunnel on the outside of the ribosome. Forms the main docking site for trigger factor binding to the ribosome.</text>
</comment>
<comment type="subunit">
    <text evidence="1">Part of the 50S ribosomal subunit. Contacts protein L29, and trigger factor when it is bound to the ribosome.</text>
</comment>
<comment type="similarity">
    <text evidence="1">Belongs to the universal ribosomal protein uL23 family.</text>
</comment>
<proteinExistence type="inferred from homology"/>
<keyword id="KW-1185">Reference proteome</keyword>
<keyword id="KW-0687">Ribonucleoprotein</keyword>
<keyword id="KW-0689">Ribosomal protein</keyword>
<keyword id="KW-0694">RNA-binding</keyword>
<keyword id="KW-0699">rRNA-binding</keyword>
<gene>
    <name evidence="1" type="primary">rplW</name>
    <name type="ordered locus">RHOS4_02960</name>
    <name type="ORF">RSP_1718</name>
</gene>
<accession>Q3J5S0</accession>
<protein>
    <recommendedName>
        <fullName evidence="1">Large ribosomal subunit protein uL23</fullName>
    </recommendedName>
    <alternativeName>
        <fullName evidence="2">50S ribosomal protein L23</fullName>
    </alternativeName>
</protein>
<reference key="1">
    <citation type="submission" date="2005-09" db="EMBL/GenBank/DDBJ databases">
        <title>Complete sequence of chromosome 1 of Rhodobacter sphaeroides 2.4.1.</title>
        <authorList>
            <person name="Copeland A."/>
            <person name="Lucas S."/>
            <person name="Lapidus A."/>
            <person name="Barry K."/>
            <person name="Detter J.C."/>
            <person name="Glavina T."/>
            <person name="Hammon N."/>
            <person name="Israni S."/>
            <person name="Pitluck S."/>
            <person name="Richardson P."/>
            <person name="Mackenzie C."/>
            <person name="Choudhary M."/>
            <person name="Larimer F."/>
            <person name="Hauser L.J."/>
            <person name="Land M."/>
            <person name="Donohue T.J."/>
            <person name="Kaplan S."/>
        </authorList>
    </citation>
    <scope>NUCLEOTIDE SEQUENCE [LARGE SCALE GENOMIC DNA]</scope>
    <source>
        <strain>ATCC 17023 / DSM 158 / JCM 6121 / CCUG 31486 / LMG 2827 / NBRC 12203 / NCIMB 8253 / ATH 2.4.1.</strain>
    </source>
</reference>
<feature type="chain" id="PRO_0000272821" description="Large ribosomal subunit protein uL23">
    <location>
        <begin position="1"/>
        <end position="98"/>
    </location>
</feature>
<organism>
    <name type="scientific">Cereibacter sphaeroides (strain ATCC 17023 / DSM 158 / JCM 6121 / CCUG 31486 / LMG 2827 / NBRC 12203 / NCIMB 8253 / ATH 2.4.1.)</name>
    <name type="common">Rhodobacter sphaeroides</name>
    <dbReference type="NCBI Taxonomy" id="272943"/>
    <lineage>
        <taxon>Bacteria</taxon>
        <taxon>Pseudomonadati</taxon>
        <taxon>Pseudomonadota</taxon>
        <taxon>Alphaproteobacteria</taxon>
        <taxon>Rhodobacterales</taxon>
        <taxon>Paracoccaceae</taxon>
        <taxon>Cereibacter</taxon>
    </lineage>
</organism>
<dbReference type="EMBL" id="CP000143">
    <property type="protein sequence ID" value="ABA77864.1"/>
    <property type="molecule type" value="Genomic_DNA"/>
</dbReference>
<dbReference type="RefSeq" id="WP_002722494.1">
    <property type="nucleotide sequence ID" value="NZ_CP030271.1"/>
</dbReference>
<dbReference type="RefSeq" id="YP_351765.1">
    <property type="nucleotide sequence ID" value="NC_007493.2"/>
</dbReference>
<dbReference type="SMR" id="Q3J5S0"/>
<dbReference type="STRING" id="272943.RSP_1718"/>
<dbReference type="EnsemblBacteria" id="ABA77864">
    <property type="protein sequence ID" value="ABA77864"/>
    <property type="gene ID" value="RSP_1718"/>
</dbReference>
<dbReference type="KEGG" id="rsp:RSP_1718"/>
<dbReference type="PATRIC" id="fig|272943.9.peg.595"/>
<dbReference type="eggNOG" id="COG0089">
    <property type="taxonomic scope" value="Bacteria"/>
</dbReference>
<dbReference type="OrthoDB" id="9793353at2"/>
<dbReference type="PhylomeDB" id="Q3J5S0"/>
<dbReference type="Proteomes" id="UP000002703">
    <property type="component" value="Chromosome 1"/>
</dbReference>
<dbReference type="GO" id="GO:1990904">
    <property type="term" value="C:ribonucleoprotein complex"/>
    <property type="evidence" value="ECO:0007669"/>
    <property type="project" value="UniProtKB-KW"/>
</dbReference>
<dbReference type="GO" id="GO:0005840">
    <property type="term" value="C:ribosome"/>
    <property type="evidence" value="ECO:0007669"/>
    <property type="project" value="UniProtKB-KW"/>
</dbReference>
<dbReference type="GO" id="GO:0019843">
    <property type="term" value="F:rRNA binding"/>
    <property type="evidence" value="ECO:0007669"/>
    <property type="project" value="UniProtKB-UniRule"/>
</dbReference>
<dbReference type="GO" id="GO:0003735">
    <property type="term" value="F:structural constituent of ribosome"/>
    <property type="evidence" value="ECO:0007669"/>
    <property type="project" value="InterPro"/>
</dbReference>
<dbReference type="GO" id="GO:0006412">
    <property type="term" value="P:translation"/>
    <property type="evidence" value="ECO:0007669"/>
    <property type="project" value="UniProtKB-UniRule"/>
</dbReference>
<dbReference type="FunFam" id="3.30.70.330:FF:000001">
    <property type="entry name" value="50S ribosomal protein L23"/>
    <property type="match status" value="1"/>
</dbReference>
<dbReference type="Gene3D" id="3.30.70.330">
    <property type="match status" value="1"/>
</dbReference>
<dbReference type="HAMAP" id="MF_01369_B">
    <property type="entry name" value="Ribosomal_uL23_B"/>
    <property type="match status" value="1"/>
</dbReference>
<dbReference type="InterPro" id="IPR012677">
    <property type="entry name" value="Nucleotide-bd_a/b_plait_sf"/>
</dbReference>
<dbReference type="InterPro" id="IPR013025">
    <property type="entry name" value="Ribosomal_uL23-like"/>
</dbReference>
<dbReference type="InterPro" id="IPR012678">
    <property type="entry name" value="Ribosomal_uL23/eL15/eS24_sf"/>
</dbReference>
<dbReference type="NCBIfam" id="NF004359">
    <property type="entry name" value="PRK05738.1-3"/>
    <property type="match status" value="1"/>
</dbReference>
<dbReference type="NCBIfam" id="NF004360">
    <property type="entry name" value="PRK05738.1-5"/>
    <property type="match status" value="1"/>
</dbReference>
<dbReference type="NCBIfam" id="NF004363">
    <property type="entry name" value="PRK05738.2-4"/>
    <property type="match status" value="1"/>
</dbReference>
<dbReference type="PANTHER" id="PTHR11620">
    <property type="entry name" value="60S RIBOSOMAL PROTEIN L23A"/>
    <property type="match status" value="1"/>
</dbReference>
<dbReference type="Pfam" id="PF00276">
    <property type="entry name" value="Ribosomal_L23"/>
    <property type="match status" value="1"/>
</dbReference>
<dbReference type="SUPFAM" id="SSF54189">
    <property type="entry name" value="Ribosomal proteins S24e, L23 and L15e"/>
    <property type="match status" value="1"/>
</dbReference>
<evidence type="ECO:0000255" key="1">
    <source>
        <dbReference type="HAMAP-Rule" id="MF_01369"/>
    </source>
</evidence>
<evidence type="ECO:0000305" key="2"/>
<sequence>MTAKPEHYDVIRKPVITEKATMTSEANGVVFAVAMEATKPQIKEAVEAIFNVKVKAVNTVVTKGKTKKFKGRPGVRSDRKKAYVTLEEGNTIDVSTGL</sequence>